<gene>
    <name evidence="1" type="primary">rpsD</name>
    <name type="ordered locus">MCAP_0237</name>
</gene>
<comment type="function">
    <text evidence="1">One of the primary rRNA binding proteins, it binds directly to 16S rRNA where it nucleates assembly of the body of the 30S subunit.</text>
</comment>
<comment type="function">
    <text evidence="1">With S5 and S12 plays an important role in translational accuracy.</text>
</comment>
<comment type="subunit">
    <text evidence="1">Part of the 30S ribosomal subunit. Contacts protein S5. The interaction surface between S4 and S5 is involved in control of translational fidelity.</text>
</comment>
<comment type="similarity">
    <text evidence="1">Belongs to the universal ribosomal protein uS4 family.</text>
</comment>
<reference key="1">
    <citation type="submission" date="2005-09" db="EMBL/GenBank/DDBJ databases">
        <authorList>
            <person name="Glass J.I."/>
            <person name="Lartigue C."/>
            <person name="Pfannkoch C."/>
            <person name="Baden-Tillson H."/>
            <person name="Smith H.O."/>
            <person name="Venter J.C."/>
            <person name="Roske K."/>
            <person name="Wise K.S."/>
            <person name="Calcutt M.J."/>
            <person name="Nelson W.C."/>
            <person name="Nierman W.C."/>
        </authorList>
    </citation>
    <scope>NUCLEOTIDE SEQUENCE [LARGE SCALE GENOMIC DNA]</scope>
    <source>
        <strain>California kid / ATCC 27343 / NCTC 10154</strain>
    </source>
</reference>
<protein>
    <recommendedName>
        <fullName evidence="1">Small ribosomal subunit protein uS4</fullName>
    </recommendedName>
    <alternativeName>
        <fullName evidence="2">30S ribosomal protein S4</fullName>
    </alternativeName>
</protein>
<sequence length="208" mass="23886">MSRFIGSTFKKSRRFGFSILETGKEFSKGKKRITTPGQHGKERAKVKVSEYGQQLQEKQKVKFMYGLSERQFRNTFAKAKKMQGILGTNFLVLLESRLDNIVYRLGFSATRQGARQLVNHGHILVNGKKVDIPSYLLSVGDLVEVKASMKKNEKVLEALQNNEATLEFVKVNKNEVKGEFVRLPERNELNSEISESLIVEWYNRLIKK</sequence>
<proteinExistence type="inferred from homology"/>
<feature type="chain" id="PRO_0000228900" description="Small ribosomal subunit protein uS4">
    <location>
        <begin position="1"/>
        <end position="208"/>
    </location>
</feature>
<feature type="domain" description="S4 RNA-binding" evidence="1">
    <location>
        <begin position="96"/>
        <end position="159"/>
    </location>
</feature>
<evidence type="ECO:0000255" key="1">
    <source>
        <dbReference type="HAMAP-Rule" id="MF_01306"/>
    </source>
</evidence>
<evidence type="ECO:0000305" key="2"/>
<dbReference type="EMBL" id="CP000123">
    <property type="protein sequence ID" value="ABC01806.1"/>
    <property type="molecule type" value="Genomic_DNA"/>
</dbReference>
<dbReference type="RefSeq" id="WP_011387125.1">
    <property type="nucleotide sequence ID" value="NC_007633.1"/>
</dbReference>
<dbReference type="SMR" id="Q2SSN9"/>
<dbReference type="GeneID" id="23778809"/>
<dbReference type="KEGG" id="mcp:MCAP_0237"/>
<dbReference type="HOGENOM" id="CLU_092403_0_1_14"/>
<dbReference type="PhylomeDB" id="Q2SSN9"/>
<dbReference type="Proteomes" id="UP000001928">
    <property type="component" value="Chromosome"/>
</dbReference>
<dbReference type="GO" id="GO:0015935">
    <property type="term" value="C:small ribosomal subunit"/>
    <property type="evidence" value="ECO:0007669"/>
    <property type="project" value="InterPro"/>
</dbReference>
<dbReference type="GO" id="GO:0019843">
    <property type="term" value="F:rRNA binding"/>
    <property type="evidence" value="ECO:0007669"/>
    <property type="project" value="UniProtKB-UniRule"/>
</dbReference>
<dbReference type="GO" id="GO:0003735">
    <property type="term" value="F:structural constituent of ribosome"/>
    <property type="evidence" value="ECO:0007669"/>
    <property type="project" value="InterPro"/>
</dbReference>
<dbReference type="GO" id="GO:0042274">
    <property type="term" value="P:ribosomal small subunit biogenesis"/>
    <property type="evidence" value="ECO:0007669"/>
    <property type="project" value="TreeGrafter"/>
</dbReference>
<dbReference type="GO" id="GO:0006412">
    <property type="term" value="P:translation"/>
    <property type="evidence" value="ECO:0007669"/>
    <property type="project" value="UniProtKB-UniRule"/>
</dbReference>
<dbReference type="CDD" id="cd00165">
    <property type="entry name" value="S4"/>
    <property type="match status" value="1"/>
</dbReference>
<dbReference type="FunFam" id="3.10.290.10:FF:000001">
    <property type="entry name" value="30S ribosomal protein S4"/>
    <property type="match status" value="1"/>
</dbReference>
<dbReference type="Gene3D" id="1.10.1050.10">
    <property type="entry name" value="Ribosomal Protein S4 Delta 41, Chain A, domain 1"/>
    <property type="match status" value="1"/>
</dbReference>
<dbReference type="Gene3D" id="3.10.290.10">
    <property type="entry name" value="RNA-binding S4 domain"/>
    <property type="match status" value="1"/>
</dbReference>
<dbReference type="HAMAP" id="MF_01306_B">
    <property type="entry name" value="Ribosomal_uS4_B"/>
    <property type="match status" value="1"/>
</dbReference>
<dbReference type="InterPro" id="IPR022801">
    <property type="entry name" value="Ribosomal_uS4"/>
</dbReference>
<dbReference type="InterPro" id="IPR005709">
    <property type="entry name" value="Ribosomal_uS4_bac-type"/>
</dbReference>
<dbReference type="InterPro" id="IPR018079">
    <property type="entry name" value="Ribosomal_uS4_CS"/>
</dbReference>
<dbReference type="InterPro" id="IPR001912">
    <property type="entry name" value="Ribosomal_uS4_N"/>
</dbReference>
<dbReference type="InterPro" id="IPR002942">
    <property type="entry name" value="S4_RNA-bd"/>
</dbReference>
<dbReference type="InterPro" id="IPR036986">
    <property type="entry name" value="S4_RNA-bd_sf"/>
</dbReference>
<dbReference type="NCBIfam" id="NF003717">
    <property type="entry name" value="PRK05327.1"/>
    <property type="match status" value="1"/>
</dbReference>
<dbReference type="NCBIfam" id="TIGR01017">
    <property type="entry name" value="rpsD_bact"/>
    <property type="match status" value="1"/>
</dbReference>
<dbReference type="PANTHER" id="PTHR11831">
    <property type="entry name" value="30S 40S RIBOSOMAL PROTEIN"/>
    <property type="match status" value="1"/>
</dbReference>
<dbReference type="PANTHER" id="PTHR11831:SF4">
    <property type="entry name" value="SMALL RIBOSOMAL SUBUNIT PROTEIN US4M"/>
    <property type="match status" value="1"/>
</dbReference>
<dbReference type="Pfam" id="PF00163">
    <property type="entry name" value="Ribosomal_S4"/>
    <property type="match status" value="1"/>
</dbReference>
<dbReference type="Pfam" id="PF01479">
    <property type="entry name" value="S4"/>
    <property type="match status" value="1"/>
</dbReference>
<dbReference type="SMART" id="SM01390">
    <property type="entry name" value="Ribosomal_S4"/>
    <property type="match status" value="1"/>
</dbReference>
<dbReference type="SMART" id="SM00363">
    <property type="entry name" value="S4"/>
    <property type="match status" value="1"/>
</dbReference>
<dbReference type="SUPFAM" id="SSF55174">
    <property type="entry name" value="Alpha-L RNA-binding motif"/>
    <property type="match status" value="1"/>
</dbReference>
<dbReference type="PROSITE" id="PS00632">
    <property type="entry name" value="RIBOSOMAL_S4"/>
    <property type="match status" value="1"/>
</dbReference>
<dbReference type="PROSITE" id="PS50889">
    <property type="entry name" value="S4"/>
    <property type="match status" value="1"/>
</dbReference>
<accession>Q2SSN9</accession>
<organism>
    <name type="scientific">Mycoplasma capricolum subsp. capricolum (strain California kid / ATCC 27343 / NCTC 10154)</name>
    <dbReference type="NCBI Taxonomy" id="340047"/>
    <lineage>
        <taxon>Bacteria</taxon>
        <taxon>Bacillati</taxon>
        <taxon>Mycoplasmatota</taxon>
        <taxon>Mollicutes</taxon>
        <taxon>Mycoplasmataceae</taxon>
        <taxon>Mycoplasma</taxon>
    </lineage>
</organism>
<keyword id="KW-0687">Ribonucleoprotein</keyword>
<keyword id="KW-0689">Ribosomal protein</keyword>
<keyword id="KW-0694">RNA-binding</keyword>
<keyword id="KW-0699">rRNA-binding</keyword>
<name>RS4_MYCCT</name>